<name>NADD_LACLA</name>
<proteinExistence type="inferred from homology"/>
<keyword id="KW-0067">ATP-binding</keyword>
<keyword id="KW-0520">NAD</keyword>
<keyword id="KW-0547">Nucleotide-binding</keyword>
<keyword id="KW-0548">Nucleotidyltransferase</keyword>
<keyword id="KW-0662">Pyridine nucleotide biosynthesis</keyword>
<keyword id="KW-1185">Reference proteome</keyword>
<keyword id="KW-0808">Transferase</keyword>
<sequence length="195" mass="22651">MDKGNRKKVGLLGGNFNPIHHAHLMMADQVAQQMNLDKVLLMPENIPPHVDEKETISAKHRVKMLELAIKENPRLGLELIEIERGGKSYSYDTLKLLTEANPDTDYYFIIGSDMVEYLPKWYKIDELLKLVTFIALRRKDTISKSPYPVTWLDAPLLPISSTMLREMFAKNIEPTYFLPQNVIDYIKTEKLYKKR</sequence>
<dbReference type="EC" id="2.7.7.18"/>
<dbReference type="EMBL" id="AE005176">
    <property type="protein sequence ID" value="AAK05197.1"/>
    <property type="molecule type" value="Genomic_DNA"/>
</dbReference>
<dbReference type="PIR" id="C86762">
    <property type="entry name" value="C86762"/>
</dbReference>
<dbReference type="RefSeq" id="NP_267255.1">
    <property type="nucleotide sequence ID" value="NC_002662.1"/>
</dbReference>
<dbReference type="RefSeq" id="WP_010905755.1">
    <property type="nucleotide sequence ID" value="NC_002662.1"/>
</dbReference>
<dbReference type="SMR" id="Q9CGJ7"/>
<dbReference type="PaxDb" id="272623-L106374"/>
<dbReference type="EnsemblBacteria" id="AAK05197">
    <property type="protein sequence ID" value="AAK05197"/>
    <property type="gene ID" value="L106374"/>
</dbReference>
<dbReference type="KEGG" id="lla:L106374"/>
<dbReference type="PATRIC" id="fig|272623.7.peg.1177"/>
<dbReference type="eggNOG" id="COG1057">
    <property type="taxonomic scope" value="Bacteria"/>
</dbReference>
<dbReference type="HOGENOM" id="CLU_069765_3_1_9"/>
<dbReference type="OrthoDB" id="5295945at2"/>
<dbReference type="UniPathway" id="UPA00253">
    <property type="reaction ID" value="UER00332"/>
</dbReference>
<dbReference type="Proteomes" id="UP000002196">
    <property type="component" value="Chromosome"/>
</dbReference>
<dbReference type="GO" id="GO:0005524">
    <property type="term" value="F:ATP binding"/>
    <property type="evidence" value="ECO:0007669"/>
    <property type="project" value="UniProtKB-KW"/>
</dbReference>
<dbReference type="GO" id="GO:0004515">
    <property type="term" value="F:nicotinate-nucleotide adenylyltransferase activity"/>
    <property type="evidence" value="ECO:0007669"/>
    <property type="project" value="UniProtKB-UniRule"/>
</dbReference>
<dbReference type="GO" id="GO:0009435">
    <property type="term" value="P:NAD biosynthetic process"/>
    <property type="evidence" value="ECO:0007669"/>
    <property type="project" value="UniProtKB-UniRule"/>
</dbReference>
<dbReference type="CDD" id="cd02165">
    <property type="entry name" value="NMNAT"/>
    <property type="match status" value="1"/>
</dbReference>
<dbReference type="Gene3D" id="3.40.50.620">
    <property type="entry name" value="HUPs"/>
    <property type="match status" value="1"/>
</dbReference>
<dbReference type="HAMAP" id="MF_00244">
    <property type="entry name" value="NaMN_adenylyltr"/>
    <property type="match status" value="1"/>
</dbReference>
<dbReference type="InterPro" id="IPR004821">
    <property type="entry name" value="Cyt_trans-like"/>
</dbReference>
<dbReference type="InterPro" id="IPR005248">
    <property type="entry name" value="NadD/NMNAT"/>
</dbReference>
<dbReference type="InterPro" id="IPR014729">
    <property type="entry name" value="Rossmann-like_a/b/a_fold"/>
</dbReference>
<dbReference type="NCBIfam" id="TIGR00125">
    <property type="entry name" value="cyt_tran_rel"/>
    <property type="match status" value="1"/>
</dbReference>
<dbReference type="NCBIfam" id="TIGR00482">
    <property type="entry name" value="nicotinate (nicotinamide) nucleotide adenylyltransferase"/>
    <property type="match status" value="1"/>
</dbReference>
<dbReference type="NCBIfam" id="NF000840">
    <property type="entry name" value="PRK00071.1-3"/>
    <property type="match status" value="1"/>
</dbReference>
<dbReference type="NCBIfam" id="NF000841">
    <property type="entry name" value="PRK00071.1-4"/>
    <property type="match status" value="1"/>
</dbReference>
<dbReference type="PANTHER" id="PTHR39321">
    <property type="entry name" value="NICOTINATE-NUCLEOTIDE ADENYLYLTRANSFERASE-RELATED"/>
    <property type="match status" value="1"/>
</dbReference>
<dbReference type="PANTHER" id="PTHR39321:SF3">
    <property type="entry name" value="PHOSPHOPANTETHEINE ADENYLYLTRANSFERASE"/>
    <property type="match status" value="1"/>
</dbReference>
<dbReference type="Pfam" id="PF01467">
    <property type="entry name" value="CTP_transf_like"/>
    <property type="match status" value="1"/>
</dbReference>
<dbReference type="SUPFAM" id="SSF52374">
    <property type="entry name" value="Nucleotidylyl transferase"/>
    <property type="match status" value="1"/>
</dbReference>
<comment type="function">
    <text evidence="1">Catalyzes the reversible adenylation of nicotinate mononucleotide (NaMN) to nicotinic acid adenine dinucleotide (NaAD).</text>
</comment>
<comment type="catalytic activity">
    <reaction>
        <text>nicotinate beta-D-ribonucleotide + ATP + H(+) = deamido-NAD(+) + diphosphate</text>
        <dbReference type="Rhea" id="RHEA:22860"/>
        <dbReference type="ChEBI" id="CHEBI:15378"/>
        <dbReference type="ChEBI" id="CHEBI:30616"/>
        <dbReference type="ChEBI" id="CHEBI:33019"/>
        <dbReference type="ChEBI" id="CHEBI:57502"/>
        <dbReference type="ChEBI" id="CHEBI:58437"/>
        <dbReference type="EC" id="2.7.7.18"/>
    </reaction>
</comment>
<comment type="pathway">
    <text>Cofactor biosynthesis; NAD(+) biosynthesis; deamido-NAD(+) from nicotinate D-ribonucleotide: step 1/1.</text>
</comment>
<comment type="similarity">
    <text evidence="2">Belongs to the NadD family.</text>
</comment>
<protein>
    <recommendedName>
        <fullName>Probable nicotinate-nucleotide adenylyltransferase</fullName>
        <ecNumber>2.7.7.18</ecNumber>
    </recommendedName>
    <alternativeName>
        <fullName>Deamido-NAD(+) diphosphorylase</fullName>
    </alternativeName>
    <alternativeName>
        <fullName>Deamido-NAD(+) pyrophosphorylase</fullName>
    </alternativeName>
    <alternativeName>
        <fullName>Nicotinate mononucleotide adenylyltransferase</fullName>
        <shortName>NaMN adenylyltransferase</shortName>
    </alternativeName>
</protein>
<organism>
    <name type="scientific">Lactococcus lactis subsp. lactis (strain IL1403)</name>
    <name type="common">Streptococcus lactis</name>
    <dbReference type="NCBI Taxonomy" id="272623"/>
    <lineage>
        <taxon>Bacteria</taxon>
        <taxon>Bacillati</taxon>
        <taxon>Bacillota</taxon>
        <taxon>Bacilli</taxon>
        <taxon>Lactobacillales</taxon>
        <taxon>Streptococcaceae</taxon>
        <taxon>Lactococcus</taxon>
    </lineage>
</organism>
<gene>
    <name type="primary">nadD</name>
    <name type="ordered locus">LL1099</name>
    <name type="ORF">L106374</name>
</gene>
<accession>Q9CGJ7</accession>
<feature type="chain" id="PRO_0000181417" description="Probable nicotinate-nucleotide adenylyltransferase">
    <location>
        <begin position="1"/>
        <end position="195"/>
    </location>
</feature>
<reference key="1">
    <citation type="journal article" date="2001" name="Genome Res.">
        <title>The complete genome sequence of the lactic acid bacterium Lactococcus lactis ssp. lactis IL1403.</title>
        <authorList>
            <person name="Bolotin A."/>
            <person name="Wincker P."/>
            <person name="Mauger S."/>
            <person name="Jaillon O."/>
            <person name="Malarme K."/>
            <person name="Weissenbach J."/>
            <person name="Ehrlich S.D."/>
            <person name="Sorokin A."/>
        </authorList>
    </citation>
    <scope>NUCLEOTIDE SEQUENCE [LARGE SCALE GENOMIC DNA]</scope>
    <source>
        <strain>IL1403</strain>
    </source>
</reference>
<evidence type="ECO:0000250" key="1"/>
<evidence type="ECO:0000305" key="2"/>